<evidence type="ECO:0000255" key="1">
    <source>
        <dbReference type="HAMAP-Rule" id="MF_00184"/>
    </source>
</evidence>
<evidence type="ECO:0000255" key="2">
    <source>
        <dbReference type="PROSITE-ProRule" id="PRU01228"/>
    </source>
</evidence>
<accession>Q2A2J0</accession>
<comment type="function">
    <text evidence="1">Catalyzes the attachment of threonine to tRNA(Thr) in a two-step reaction: L-threonine is first activated by ATP to form Thr-AMP and then transferred to the acceptor end of tRNA(Thr). Also edits incorrectly charged L-seryl-tRNA(Thr).</text>
</comment>
<comment type="catalytic activity">
    <reaction evidence="1">
        <text>tRNA(Thr) + L-threonine + ATP = L-threonyl-tRNA(Thr) + AMP + diphosphate + H(+)</text>
        <dbReference type="Rhea" id="RHEA:24624"/>
        <dbReference type="Rhea" id="RHEA-COMP:9670"/>
        <dbReference type="Rhea" id="RHEA-COMP:9704"/>
        <dbReference type="ChEBI" id="CHEBI:15378"/>
        <dbReference type="ChEBI" id="CHEBI:30616"/>
        <dbReference type="ChEBI" id="CHEBI:33019"/>
        <dbReference type="ChEBI" id="CHEBI:57926"/>
        <dbReference type="ChEBI" id="CHEBI:78442"/>
        <dbReference type="ChEBI" id="CHEBI:78534"/>
        <dbReference type="ChEBI" id="CHEBI:456215"/>
        <dbReference type="EC" id="6.1.1.3"/>
    </reaction>
</comment>
<comment type="cofactor">
    <cofactor evidence="1">
        <name>Zn(2+)</name>
        <dbReference type="ChEBI" id="CHEBI:29105"/>
    </cofactor>
    <text evidence="1">Binds 1 zinc ion per subunit.</text>
</comment>
<comment type="subunit">
    <text evidence="1">Homodimer.</text>
</comment>
<comment type="subcellular location">
    <subcellularLocation>
        <location evidence="1">Cytoplasm</location>
    </subcellularLocation>
</comment>
<comment type="similarity">
    <text evidence="1">Belongs to the class-II aminoacyl-tRNA synthetase family.</text>
</comment>
<organism>
    <name type="scientific">Francisella tularensis subsp. holarctica (strain LVS)</name>
    <dbReference type="NCBI Taxonomy" id="376619"/>
    <lineage>
        <taxon>Bacteria</taxon>
        <taxon>Pseudomonadati</taxon>
        <taxon>Pseudomonadota</taxon>
        <taxon>Gammaproteobacteria</taxon>
        <taxon>Thiotrichales</taxon>
        <taxon>Francisellaceae</taxon>
        <taxon>Francisella</taxon>
    </lineage>
</organism>
<sequence length="634" mass="72382">MINIRFPDGSIREFEAGVNSLDVAKSISPSLAKATMAAYIDDQLKDAKDAINSNCELRLITVKDPEGLEILRHSCAHLLAHAVKELYPNTEVTIGPVVDNGFYYDFSFKESIGEADLPTIEKKMKELAKKSAPVSYRVVPKAEAIEFFKAQGENYKVEIIDSIADEQMKIYTQDNFSDLCRGPHIPNTSVLKAFKLTKLAGAYWRGNSDNEMLTRIYGTCWATKEDLEQYLNMLEEAEKRDHRKIGKVLDLFHFQEDSPGIAFWHDNGVRIWRQVEDYMRASNNKYGCSEIRTPLIADFSLWQKSGHASKYAENMFATKSENRDFAIRPMNCPTCVQVYNTKLHSYRDLPIRMAEFGIVHRNEPSGSLHGLLRVRSFTQDDGHIFCTPEQVEEEVILMVQQCFEVYKDFGFNDFAVKIALRPENRIGDDETWDKSEQILKNALDANNVSYELFPGEGAFYGPKIEFHLKDAIGRSWQCGTIQLDFSMPQRLGATYIDKNGEKQVSVMLHRAIVGSLERFIGMLIEHYAGNLPLWLAPVQVAVMGISNNQDDYCKEVFIMLEKNGIRAKLDLRNEKIGFKIREHTLLRVPYLVILGKNEQEQKIITIRKHSGEDLGQMSVDDFCAFLDKQIQAKE</sequence>
<reference key="1">
    <citation type="submission" date="2006-03" db="EMBL/GenBank/DDBJ databases">
        <title>Complete genome sequence of Francisella tularensis LVS (Live Vaccine Strain).</title>
        <authorList>
            <person name="Chain P."/>
            <person name="Larimer F."/>
            <person name="Land M."/>
            <person name="Stilwagen S."/>
            <person name="Larsson P."/>
            <person name="Bearden S."/>
            <person name="Chu M."/>
            <person name="Oyston P."/>
            <person name="Forsman M."/>
            <person name="Andersson S."/>
            <person name="Lindler L."/>
            <person name="Titball R."/>
            <person name="Garcia E."/>
        </authorList>
    </citation>
    <scope>NUCLEOTIDE SEQUENCE [LARGE SCALE GENOMIC DNA]</scope>
    <source>
        <strain>LVS</strain>
    </source>
</reference>
<gene>
    <name evidence="1" type="primary">thrS</name>
    <name type="ordered locus">FTL_1407</name>
</gene>
<proteinExistence type="inferred from homology"/>
<keyword id="KW-0030">Aminoacyl-tRNA synthetase</keyword>
<keyword id="KW-0067">ATP-binding</keyword>
<keyword id="KW-0963">Cytoplasm</keyword>
<keyword id="KW-0436">Ligase</keyword>
<keyword id="KW-0479">Metal-binding</keyword>
<keyword id="KW-0547">Nucleotide-binding</keyword>
<keyword id="KW-0648">Protein biosynthesis</keyword>
<keyword id="KW-1185">Reference proteome</keyword>
<keyword id="KW-0694">RNA-binding</keyword>
<keyword id="KW-0820">tRNA-binding</keyword>
<keyword id="KW-0862">Zinc</keyword>
<protein>
    <recommendedName>
        <fullName evidence="1">Threonine--tRNA ligase</fullName>
        <ecNumber evidence="1">6.1.1.3</ecNumber>
    </recommendedName>
    <alternativeName>
        <fullName evidence="1">Threonyl-tRNA synthetase</fullName>
        <shortName evidence="1">ThrRS</shortName>
    </alternativeName>
</protein>
<name>SYT_FRATH</name>
<dbReference type="EC" id="6.1.1.3" evidence="1"/>
<dbReference type="EMBL" id="AM233362">
    <property type="protein sequence ID" value="CAJ79846.1"/>
    <property type="molecule type" value="Genomic_DNA"/>
</dbReference>
<dbReference type="RefSeq" id="WP_003016677.1">
    <property type="nucleotide sequence ID" value="NZ_CP009694.1"/>
</dbReference>
<dbReference type="SMR" id="Q2A2J0"/>
<dbReference type="KEGG" id="ftl:FTL_1407"/>
<dbReference type="Proteomes" id="UP000001944">
    <property type="component" value="Chromosome"/>
</dbReference>
<dbReference type="GO" id="GO:0005737">
    <property type="term" value="C:cytoplasm"/>
    <property type="evidence" value="ECO:0007669"/>
    <property type="project" value="UniProtKB-SubCell"/>
</dbReference>
<dbReference type="GO" id="GO:0005524">
    <property type="term" value="F:ATP binding"/>
    <property type="evidence" value="ECO:0007669"/>
    <property type="project" value="UniProtKB-UniRule"/>
</dbReference>
<dbReference type="GO" id="GO:0046872">
    <property type="term" value="F:metal ion binding"/>
    <property type="evidence" value="ECO:0007669"/>
    <property type="project" value="UniProtKB-KW"/>
</dbReference>
<dbReference type="GO" id="GO:0004829">
    <property type="term" value="F:threonine-tRNA ligase activity"/>
    <property type="evidence" value="ECO:0007669"/>
    <property type="project" value="UniProtKB-UniRule"/>
</dbReference>
<dbReference type="GO" id="GO:0000049">
    <property type="term" value="F:tRNA binding"/>
    <property type="evidence" value="ECO:0007669"/>
    <property type="project" value="UniProtKB-KW"/>
</dbReference>
<dbReference type="GO" id="GO:0006435">
    <property type="term" value="P:threonyl-tRNA aminoacylation"/>
    <property type="evidence" value="ECO:0007669"/>
    <property type="project" value="UniProtKB-UniRule"/>
</dbReference>
<dbReference type="CDD" id="cd01667">
    <property type="entry name" value="TGS_ThrRS"/>
    <property type="match status" value="1"/>
</dbReference>
<dbReference type="CDD" id="cd00860">
    <property type="entry name" value="ThrRS_anticodon"/>
    <property type="match status" value="1"/>
</dbReference>
<dbReference type="CDD" id="cd00771">
    <property type="entry name" value="ThrRS_core"/>
    <property type="match status" value="1"/>
</dbReference>
<dbReference type="FunFam" id="3.10.20.30:FF:000005">
    <property type="entry name" value="Threonine--tRNA ligase"/>
    <property type="match status" value="1"/>
</dbReference>
<dbReference type="FunFam" id="3.30.54.20:FF:000002">
    <property type="entry name" value="Threonine--tRNA ligase"/>
    <property type="match status" value="1"/>
</dbReference>
<dbReference type="FunFam" id="3.30.930.10:FF:000002">
    <property type="entry name" value="Threonine--tRNA ligase"/>
    <property type="match status" value="1"/>
</dbReference>
<dbReference type="FunFam" id="3.40.50.800:FF:000001">
    <property type="entry name" value="Threonine--tRNA ligase"/>
    <property type="match status" value="1"/>
</dbReference>
<dbReference type="FunFam" id="3.30.980.10:FF:000005">
    <property type="entry name" value="Threonyl-tRNA synthetase, mitochondrial"/>
    <property type="match status" value="1"/>
</dbReference>
<dbReference type="Gene3D" id="3.10.20.30">
    <property type="match status" value="1"/>
</dbReference>
<dbReference type="Gene3D" id="3.30.54.20">
    <property type="match status" value="1"/>
</dbReference>
<dbReference type="Gene3D" id="3.40.50.800">
    <property type="entry name" value="Anticodon-binding domain"/>
    <property type="match status" value="1"/>
</dbReference>
<dbReference type="Gene3D" id="3.30.930.10">
    <property type="entry name" value="Bira Bifunctional Protein, Domain 2"/>
    <property type="match status" value="1"/>
</dbReference>
<dbReference type="Gene3D" id="3.30.980.10">
    <property type="entry name" value="Threonyl-trna Synthetase, Chain A, domain 2"/>
    <property type="match status" value="1"/>
</dbReference>
<dbReference type="HAMAP" id="MF_00184">
    <property type="entry name" value="Thr_tRNA_synth"/>
    <property type="match status" value="1"/>
</dbReference>
<dbReference type="InterPro" id="IPR002314">
    <property type="entry name" value="aa-tRNA-synt_IIb"/>
</dbReference>
<dbReference type="InterPro" id="IPR006195">
    <property type="entry name" value="aa-tRNA-synth_II"/>
</dbReference>
<dbReference type="InterPro" id="IPR045864">
    <property type="entry name" value="aa-tRNA-synth_II/BPL/LPL"/>
</dbReference>
<dbReference type="InterPro" id="IPR004154">
    <property type="entry name" value="Anticodon-bd"/>
</dbReference>
<dbReference type="InterPro" id="IPR036621">
    <property type="entry name" value="Anticodon-bd_dom_sf"/>
</dbReference>
<dbReference type="InterPro" id="IPR012675">
    <property type="entry name" value="Beta-grasp_dom_sf"/>
</dbReference>
<dbReference type="InterPro" id="IPR004095">
    <property type="entry name" value="TGS"/>
</dbReference>
<dbReference type="InterPro" id="IPR012676">
    <property type="entry name" value="TGS-like"/>
</dbReference>
<dbReference type="InterPro" id="IPR002320">
    <property type="entry name" value="Thr-tRNA-ligase_IIa"/>
</dbReference>
<dbReference type="InterPro" id="IPR018163">
    <property type="entry name" value="Thr/Ala-tRNA-synth_IIc_edit"/>
</dbReference>
<dbReference type="InterPro" id="IPR047246">
    <property type="entry name" value="ThrRS_anticodon"/>
</dbReference>
<dbReference type="InterPro" id="IPR033728">
    <property type="entry name" value="ThrRS_core"/>
</dbReference>
<dbReference type="InterPro" id="IPR012947">
    <property type="entry name" value="tRNA_SAD"/>
</dbReference>
<dbReference type="NCBIfam" id="TIGR00418">
    <property type="entry name" value="thrS"/>
    <property type="match status" value="1"/>
</dbReference>
<dbReference type="PANTHER" id="PTHR11451:SF44">
    <property type="entry name" value="THREONINE--TRNA LIGASE, CHLOROPLASTIC_MITOCHONDRIAL 2"/>
    <property type="match status" value="1"/>
</dbReference>
<dbReference type="PANTHER" id="PTHR11451">
    <property type="entry name" value="THREONINE-TRNA LIGASE"/>
    <property type="match status" value="1"/>
</dbReference>
<dbReference type="Pfam" id="PF03129">
    <property type="entry name" value="HGTP_anticodon"/>
    <property type="match status" value="1"/>
</dbReference>
<dbReference type="Pfam" id="PF02824">
    <property type="entry name" value="TGS"/>
    <property type="match status" value="1"/>
</dbReference>
<dbReference type="Pfam" id="PF00587">
    <property type="entry name" value="tRNA-synt_2b"/>
    <property type="match status" value="1"/>
</dbReference>
<dbReference type="Pfam" id="PF07973">
    <property type="entry name" value="tRNA_SAD"/>
    <property type="match status" value="1"/>
</dbReference>
<dbReference type="PRINTS" id="PR01047">
    <property type="entry name" value="TRNASYNTHTHR"/>
</dbReference>
<dbReference type="SMART" id="SM00863">
    <property type="entry name" value="tRNA_SAD"/>
    <property type="match status" value="1"/>
</dbReference>
<dbReference type="SUPFAM" id="SSF52954">
    <property type="entry name" value="Class II aaRS ABD-related"/>
    <property type="match status" value="1"/>
</dbReference>
<dbReference type="SUPFAM" id="SSF55681">
    <property type="entry name" value="Class II aaRS and biotin synthetases"/>
    <property type="match status" value="1"/>
</dbReference>
<dbReference type="SUPFAM" id="SSF81271">
    <property type="entry name" value="TGS-like"/>
    <property type="match status" value="1"/>
</dbReference>
<dbReference type="SUPFAM" id="SSF55186">
    <property type="entry name" value="ThrRS/AlaRS common domain"/>
    <property type="match status" value="1"/>
</dbReference>
<dbReference type="PROSITE" id="PS50862">
    <property type="entry name" value="AA_TRNA_LIGASE_II"/>
    <property type="match status" value="1"/>
</dbReference>
<dbReference type="PROSITE" id="PS51880">
    <property type="entry name" value="TGS"/>
    <property type="match status" value="1"/>
</dbReference>
<feature type="chain" id="PRO_1000020392" description="Threonine--tRNA ligase">
    <location>
        <begin position="1"/>
        <end position="634"/>
    </location>
</feature>
<feature type="domain" description="TGS" evidence="2">
    <location>
        <begin position="1"/>
        <end position="61"/>
    </location>
</feature>
<feature type="region of interest" description="Catalytic" evidence="1">
    <location>
        <begin position="241"/>
        <end position="532"/>
    </location>
</feature>
<feature type="binding site" evidence="1">
    <location>
        <position position="332"/>
    </location>
    <ligand>
        <name>Zn(2+)</name>
        <dbReference type="ChEBI" id="CHEBI:29105"/>
    </ligand>
</feature>
<feature type="binding site" evidence="1">
    <location>
        <position position="383"/>
    </location>
    <ligand>
        <name>Zn(2+)</name>
        <dbReference type="ChEBI" id="CHEBI:29105"/>
    </ligand>
</feature>
<feature type="binding site" evidence="1">
    <location>
        <position position="509"/>
    </location>
    <ligand>
        <name>Zn(2+)</name>
        <dbReference type="ChEBI" id="CHEBI:29105"/>
    </ligand>
</feature>